<name>RTI1_SCHPO</name>
<feature type="chain" id="PRO_0000173893" description="DNA repair and recombination protein rti1">
    <location>
        <begin position="1"/>
        <end position="371"/>
    </location>
</feature>
<feature type="region of interest" description="Disordered" evidence="1">
    <location>
        <begin position="346"/>
        <end position="371"/>
    </location>
</feature>
<feature type="compositionally biased region" description="Polar residues" evidence="1">
    <location>
        <begin position="358"/>
        <end position="371"/>
    </location>
</feature>
<accession>O42905</accession>
<gene>
    <name type="primary">rti1</name>
    <name type="ORF">SPBC119.14</name>
</gene>
<evidence type="ECO:0000256" key="1">
    <source>
        <dbReference type="SAM" id="MobiDB-lite"/>
    </source>
</evidence>
<evidence type="ECO:0000269" key="2">
    <source>
    </source>
</evidence>
<evidence type="ECO:0000269" key="3">
    <source>
    </source>
</evidence>
<evidence type="ECO:0000305" key="4"/>
<sequence>MGSLPDQSSCEEFTDSQQDKMTKLLAMQLGPEYISRRSGPGGGSVTYLEAWKAIELANEIFGFNGWSSSIQDIHVDYVEETKEKKFNVGISVIVRVTLKDGSFHEDVGYGSIENCRVKALAYEKCKKEGTTDALKRALRNFGSSMGNCLYDKRYIQKILKMAPAQAEFNYDNLLRANKRPYARFAQKVSTPIESHANKSVKLEHKNSIEKKISNVDKPISDLIENDIHESLPALQNPPIQSHSETDLYADEELDSILMHHERPPIPESPRVEEFEELLNQFEGDEKVSVDKIDAHDKMTEAQVVKIPPVQFMNARVAAAENPHIKHEGMAFQLHKKSNSILKSSNIDHNRSMPIRRPSLTSNNSANTFSTK</sequence>
<keyword id="KW-0227">DNA damage</keyword>
<keyword id="KW-0233">DNA recombination</keyword>
<keyword id="KW-0234">DNA repair</keyword>
<keyword id="KW-1185">Reference proteome</keyword>
<organism>
    <name type="scientific">Schizosaccharomyces pombe (strain 972 / ATCC 24843)</name>
    <name type="common">Fission yeast</name>
    <dbReference type="NCBI Taxonomy" id="284812"/>
    <lineage>
        <taxon>Eukaryota</taxon>
        <taxon>Fungi</taxon>
        <taxon>Dikarya</taxon>
        <taxon>Ascomycota</taxon>
        <taxon>Taphrinomycotina</taxon>
        <taxon>Schizosaccharomycetes</taxon>
        <taxon>Schizosaccharomycetales</taxon>
        <taxon>Schizosaccharomycetaceae</taxon>
        <taxon>Schizosaccharomyces</taxon>
    </lineage>
</organism>
<protein>
    <recommendedName>
        <fullName>DNA repair and recombination protein rti1</fullName>
    </recommendedName>
    <alternativeName>
        <fullName>Rad twenty-two isogene 1</fullName>
    </alternativeName>
    <alternativeName>
        <fullName>Rad22 homolog</fullName>
    </alternativeName>
</protein>
<reference key="1">
    <citation type="journal article" date="1999" name="Mol. Biol. Cell">
        <title>A double-strand break repair component is essential for S phase completion in fission yeast cell cycling.</title>
        <authorList>
            <person name="Suto K."/>
            <person name="Nagata A."/>
            <person name="Murakami H."/>
            <person name="Okayama H."/>
        </authorList>
    </citation>
    <scope>NUCLEOTIDE SEQUENCE [GENOMIC DNA]</scope>
    <scope>FUNCTION</scope>
</reference>
<reference key="2">
    <citation type="journal article" date="2002" name="Nature">
        <title>The genome sequence of Schizosaccharomyces pombe.</title>
        <authorList>
            <person name="Wood V."/>
            <person name="Gwilliam R."/>
            <person name="Rajandream M.A."/>
            <person name="Lyne M.H."/>
            <person name="Lyne R."/>
            <person name="Stewart A."/>
            <person name="Sgouros J.G."/>
            <person name="Peat N."/>
            <person name="Hayles J."/>
            <person name="Baker S.G."/>
            <person name="Basham D."/>
            <person name="Bowman S."/>
            <person name="Brooks K."/>
            <person name="Brown D."/>
            <person name="Brown S."/>
            <person name="Chillingworth T."/>
            <person name="Churcher C.M."/>
            <person name="Collins M."/>
            <person name="Connor R."/>
            <person name="Cronin A."/>
            <person name="Davis P."/>
            <person name="Feltwell T."/>
            <person name="Fraser A."/>
            <person name="Gentles S."/>
            <person name="Goble A."/>
            <person name="Hamlin N."/>
            <person name="Harris D.E."/>
            <person name="Hidalgo J."/>
            <person name="Hodgson G."/>
            <person name="Holroyd S."/>
            <person name="Hornsby T."/>
            <person name="Howarth S."/>
            <person name="Huckle E.J."/>
            <person name="Hunt S."/>
            <person name="Jagels K."/>
            <person name="James K.D."/>
            <person name="Jones L."/>
            <person name="Jones M."/>
            <person name="Leather S."/>
            <person name="McDonald S."/>
            <person name="McLean J."/>
            <person name="Mooney P."/>
            <person name="Moule S."/>
            <person name="Mungall K.L."/>
            <person name="Murphy L.D."/>
            <person name="Niblett D."/>
            <person name="Odell C."/>
            <person name="Oliver K."/>
            <person name="O'Neil S."/>
            <person name="Pearson D."/>
            <person name="Quail M.A."/>
            <person name="Rabbinowitsch E."/>
            <person name="Rutherford K.M."/>
            <person name="Rutter S."/>
            <person name="Saunders D."/>
            <person name="Seeger K."/>
            <person name="Sharp S."/>
            <person name="Skelton J."/>
            <person name="Simmonds M.N."/>
            <person name="Squares R."/>
            <person name="Squares S."/>
            <person name="Stevens K."/>
            <person name="Taylor K."/>
            <person name="Taylor R.G."/>
            <person name="Tivey A."/>
            <person name="Walsh S.V."/>
            <person name="Warren T."/>
            <person name="Whitehead S."/>
            <person name="Woodward J.R."/>
            <person name="Volckaert G."/>
            <person name="Aert R."/>
            <person name="Robben J."/>
            <person name="Grymonprez B."/>
            <person name="Weltjens I."/>
            <person name="Vanstreels E."/>
            <person name="Rieger M."/>
            <person name="Schaefer M."/>
            <person name="Mueller-Auer S."/>
            <person name="Gabel C."/>
            <person name="Fuchs M."/>
            <person name="Duesterhoeft A."/>
            <person name="Fritzc C."/>
            <person name="Holzer E."/>
            <person name="Moestl D."/>
            <person name="Hilbert H."/>
            <person name="Borzym K."/>
            <person name="Langer I."/>
            <person name="Beck A."/>
            <person name="Lehrach H."/>
            <person name="Reinhardt R."/>
            <person name="Pohl T.M."/>
            <person name="Eger P."/>
            <person name="Zimmermann W."/>
            <person name="Wedler H."/>
            <person name="Wambutt R."/>
            <person name="Purnelle B."/>
            <person name="Goffeau A."/>
            <person name="Cadieu E."/>
            <person name="Dreano S."/>
            <person name="Gloux S."/>
            <person name="Lelaure V."/>
            <person name="Mottier S."/>
            <person name="Galibert F."/>
            <person name="Aves S.J."/>
            <person name="Xiang Z."/>
            <person name="Hunt C."/>
            <person name="Moore K."/>
            <person name="Hurst S.M."/>
            <person name="Lucas M."/>
            <person name="Rochet M."/>
            <person name="Gaillardin C."/>
            <person name="Tallada V.A."/>
            <person name="Garzon A."/>
            <person name="Thode G."/>
            <person name="Daga R.R."/>
            <person name="Cruzado L."/>
            <person name="Jimenez J."/>
            <person name="Sanchez M."/>
            <person name="del Rey F."/>
            <person name="Benito J."/>
            <person name="Dominguez A."/>
            <person name="Revuelta J.L."/>
            <person name="Moreno S."/>
            <person name="Armstrong J."/>
            <person name="Forsburg S.L."/>
            <person name="Cerutti L."/>
            <person name="Lowe T."/>
            <person name="McCombie W.R."/>
            <person name="Paulsen I."/>
            <person name="Potashkin J."/>
            <person name="Shpakovski G.V."/>
            <person name="Ussery D."/>
            <person name="Barrell B.G."/>
            <person name="Nurse P."/>
        </authorList>
    </citation>
    <scope>NUCLEOTIDE SEQUENCE [LARGE SCALE GENOMIC DNA]</scope>
    <source>
        <strain>972 / ATCC 24843</strain>
    </source>
</reference>
<reference key="3">
    <citation type="journal article" date="2003" name="Mol. Biol. Cell">
        <title>Schizosaccharomyces pombe Rdh54 (TID1) acts with Rhp54 (RAD54) to repair meiotic double-strand breaks.</title>
        <authorList>
            <person name="Catlett M.G."/>
            <person name="Forsburg S.L."/>
        </authorList>
    </citation>
    <scope>INTERACTION WITH RPH51 AND RPH54</scope>
</reference>
<comment type="function">
    <text evidence="2">Active in the repair of DNA damage and in mating-type switching. Probably involved in the repair of DNA double-strands breaks. Has a role in promoting S phase completion.</text>
</comment>
<comment type="subunit">
    <text evidence="3">Interacts with rph51 and rph54.</text>
</comment>
<comment type="interaction">
    <interactant intactId="EBI-1167500">
        <id>O42905</id>
    </interactant>
    <interactant intactId="EBI-926960">
        <id>P36601</id>
        <label>rhp51</label>
    </interactant>
    <organismsDiffer>false</organismsDiffer>
    <experiments>3</experiments>
</comment>
<comment type="similarity">
    <text evidence="4">Belongs to the RAD52 family.</text>
</comment>
<dbReference type="EMBL" id="CU329671">
    <property type="protein sequence ID" value="CAA17929.1"/>
    <property type="molecule type" value="Genomic_DNA"/>
</dbReference>
<dbReference type="PIR" id="T39312">
    <property type="entry name" value="T39312"/>
</dbReference>
<dbReference type="RefSeq" id="NP_595296.1">
    <property type="nucleotide sequence ID" value="NM_001021203.2"/>
</dbReference>
<dbReference type="SMR" id="O42905"/>
<dbReference type="BioGRID" id="276658">
    <property type="interactions" value="14"/>
</dbReference>
<dbReference type="FunCoup" id="O42905">
    <property type="interactions" value="293"/>
</dbReference>
<dbReference type="IntAct" id="O42905">
    <property type="interactions" value="3"/>
</dbReference>
<dbReference type="STRING" id="284812.O42905"/>
<dbReference type="iPTMnet" id="O42905"/>
<dbReference type="PaxDb" id="4896-SPBC119.14.1"/>
<dbReference type="EnsemblFungi" id="SPBC119.14.1">
    <property type="protein sequence ID" value="SPBC119.14.1:pep"/>
    <property type="gene ID" value="SPBC119.14"/>
</dbReference>
<dbReference type="GeneID" id="2540121"/>
<dbReference type="KEGG" id="spo:2540121"/>
<dbReference type="PomBase" id="SPBC119.14">
    <property type="gene designation" value="rti1"/>
</dbReference>
<dbReference type="VEuPathDB" id="FungiDB:SPBC119.14"/>
<dbReference type="eggNOG" id="KOG4141">
    <property type="taxonomic scope" value="Eukaryota"/>
</dbReference>
<dbReference type="HOGENOM" id="CLU_011431_3_0_1"/>
<dbReference type="InParanoid" id="O42905"/>
<dbReference type="OMA" id="SIDNCRA"/>
<dbReference type="PhylomeDB" id="O42905"/>
<dbReference type="Reactome" id="R-SPO-3108214">
    <property type="pathway name" value="SUMOylation of DNA damage response and repair proteins"/>
</dbReference>
<dbReference type="Reactome" id="R-SPO-5685938">
    <property type="pathway name" value="HDR through Single Strand Annealing (SSA)"/>
</dbReference>
<dbReference type="PRO" id="PR:O42905"/>
<dbReference type="Proteomes" id="UP000002485">
    <property type="component" value="Chromosome II"/>
</dbReference>
<dbReference type="GO" id="GO:0000228">
    <property type="term" value="C:nuclear chromosome"/>
    <property type="evidence" value="ECO:0000266"/>
    <property type="project" value="PomBase"/>
</dbReference>
<dbReference type="GO" id="GO:0005634">
    <property type="term" value="C:nucleus"/>
    <property type="evidence" value="ECO:0007005"/>
    <property type="project" value="PomBase"/>
</dbReference>
<dbReference type="GO" id="GO:0000150">
    <property type="term" value="F:DNA strand exchange activity"/>
    <property type="evidence" value="ECO:0000266"/>
    <property type="project" value="PomBase"/>
</dbReference>
<dbReference type="GO" id="GO:0003697">
    <property type="term" value="F:single-stranded DNA binding"/>
    <property type="evidence" value="ECO:0000314"/>
    <property type="project" value="PomBase"/>
</dbReference>
<dbReference type="GO" id="GO:0000730">
    <property type="term" value="P:DNA recombinase assembly"/>
    <property type="evidence" value="ECO:0000266"/>
    <property type="project" value="PomBase"/>
</dbReference>
<dbReference type="GO" id="GO:0000724">
    <property type="term" value="P:double-strand break repair via homologous recombination"/>
    <property type="evidence" value="ECO:0000315"/>
    <property type="project" value="PomBase"/>
</dbReference>
<dbReference type="GO" id="GO:0045002">
    <property type="term" value="P:double-strand break repair via single-strand annealing"/>
    <property type="evidence" value="ECO:0000318"/>
    <property type="project" value="GO_Central"/>
</dbReference>
<dbReference type="GO" id="GO:0006312">
    <property type="term" value="P:mitotic recombination"/>
    <property type="evidence" value="ECO:0000318"/>
    <property type="project" value="GO_Central"/>
</dbReference>
<dbReference type="FunFam" id="3.30.390.80:FF:000001">
    <property type="entry name" value="DNA repair protein RAD52 homolog"/>
    <property type="match status" value="1"/>
</dbReference>
<dbReference type="Gene3D" id="3.30.390.80">
    <property type="entry name" value="DNA repair protein Rad52/59/22"/>
    <property type="match status" value="1"/>
</dbReference>
<dbReference type="InterPro" id="IPR004585">
    <property type="entry name" value="DNA_recomb/repair_Rad52"/>
</dbReference>
<dbReference type="InterPro" id="IPR041247">
    <property type="entry name" value="Rad52_fam"/>
</dbReference>
<dbReference type="InterPro" id="IPR007232">
    <property type="entry name" value="Rad52_Rad59_Rad22"/>
</dbReference>
<dbReference type="InterPro" id="IPR042525">
    <property type="entry name" value="Rad52_Rad59_Rad22_sf"/>
</dbReference>
<dbReference type="NCBIfam" id="TIGR00607">
    <property type="entry name" value="rad52"/>
    <property type="match status" value="1"/>
</dbReference>
<dbReference type="PANTHER" id="PTHR12132">
    <property type="entry name" value="DNA REPAIR AND RECOMBINATION PROTEIN RAD52, RAD59"/>
    <property type="match status" value="1"/>
</dbReference>
<dbReference type="PANTHER" id="PTHR12132:SF1">
    <property type="entry name" value="DNA REPAIR PROTEIN RAD52 HOMOLOG"/>
    <property type="match status" value="1"/>
</dbReference>
<dbReference type="Pfam" id="PF04098">
    <property type="entry name" value="Rad52_Rad22"/>
    <property type="match status" value="1"/>
</dbReference>
<dbReference type="SUPFAM" id="SSF54768">
    <property type="entry name" value="dsRNA-binding domain-like"/>
    <property type="match status" value="1"/>
</dbReference>
<proteinExistence type="evidence at protein level"/>